<name>DFP3_ANTMY</name>
<comment type="function">
    <text evidence="1">May have antimicrobial activity.</text>
</comment>
<comment type="subcellular location">
    <subcellularLocation>
        <location evidence="1">Secreted</location>
    </subcellularLocation>
</comment>
<comment type="similarity">
    <text evidence="4">Belongs to the insect defense protein family.</text>
</comment>
<accession>Q0Q028</accession>
<dbReference type="EMBL" id="DQ666502">
    <property type="protein sequence ID" value="ABG72706.1"/>
    <property type="molecule type" value="mRNA"/>
</dbReference>
<dbReference type="SMR" id="Q0Q028"/>
<dbReference type="GO" id="GO:0005576">
    <property type="term" value="C:extracellular region"/>
    <property type="evidence" value="ECO:0000250"/>
    <property type="project" value="UniProtKB"/>
</dbReference>
<dbReference type="GO" id="GO:0016020">
    <property type="term" value="C:membrane"/>
    <property type="evidence" value="ECO:0007669"/>
    <property type="project" value="TreeGrafter"/>
</dbReference>
<dbReference type="GO" id="GO:0042742">
    <property type="term" value="P:defense response to bacterium"/>
    <property type="evidence" value="ECO:0007669"/>
    <property type="project" value="UniProtKB-KW"/>
</dbReference>
<dbReference type="GO" id="GO:0042832">
    <property type="term" value="P:defense response to protozoan"/>
    <property type="evidence" value="ECO:0000250"/>
    <property type="project" value="UniProtKB"/>
</dbReference>
<dbReference type="GO" id="GO:0045087">
    <property type="term" value="P:innate immune response"/>
    <property type="evidence" value="ECO:0007669"/>
    <property type="project" value="UniProtKB-KW"/>
</dbReference>
<dbReference type="CDD" id="cd08544">
    <property type="entry name" value="Reeler"/>
    <property type="match status" value="1"/>
</dbReference>
<dbReference type="FunFam" id="2.60.40.4060:FF:000003">
    <property type="entry name" value="Ferric chelate reductase 1"/>
    <property type="match status" value="1"/>
</dbReference>
<dbReference type="Gene3D" id="2.60.40.4060">
    <property type="entry name" value="Reeler domain"/>
    <property type="match status" value="1"/>
</dbReference>
<dbReference type="InterPro" id="IPR051237">
    <property type="entry name" value="Ferric-chelate_Red/DefProt"/>
</dbReference>
<dbReference type="InterPro" id="IPR002861">
    <property type="entry name" value="Reeler_dom"/>
</dbReference>
<dbReference type="InterPro" id="IPR042307">
    <property type="entry name" value="Reeler_sf"/>
</dbReference>
<dbReference type="PANTHER" id="PTHR45828:SF9">
    <property type="entry name" value="CELL WALL INTEGRITY AND STRESS RESPONSE COMPONENT 4-LIKE-RELATED"/>
    <property type="match status" value="1"/>
</dbReference>
<dbReference type="PANTHER" id="PTHR45828">
    <property type="entry name" value="CYTOCHROME B561/FERRIC REDUCTASE TRANSMEMBRANE"/>
    <property type="match status" value="1"/>
</dbReference>
<dbReference type="Pfam" id="PF02014">
    <property type="entry name" value="Reeler"/>
    <property type="match status" value="1"/>
</dbReference>
<dbReference type="PROSITE" id="PS51019">
    <property type="entry name" value="REELIN"/>
    <property type="match status" value="1"/>
</dbReference>
<sequence>MMFAYIVAVVSALALTSAYPTGAPSSTCVSMRPGHLADPQPLPAPYTISTPVNTMKAGDSIEVTISGNTPDDFFRGILLQARQGDNIVGKWTVKDDFSKLLDCGEPDNAVTHANSVDKTTVSYIWTAPEDFVGDVVFLVTIVKVYETFWVAIPSAPVTVLSHK</sequence>
<reference key="1">
    <citation type="journal article" date="2006" name="BMC Genomics">
        <title>Analysis of bacteria-challenged wild silkmoth, Antheraea mylitta (lepidoptera) transcriptome reveals potential immune genes.</title>
        <authorList>
            <person name="Gandhe A.S."/>
            <person name="Arunkumar K.P."/>
            <person name="John S.H."/>
            <person name="Nagaraju J."/>
        </authorList>
    </citation>
    <scope>NUCLEOTIDE SEQUENCE [MRNA]</scope>
    <source>
        <tissue>Fat body</tissue>
    </source>
</reference>
<protein>
    <recommendedName>
        <fullName>Putative defense protein 3</fullName>
        <shortName>DFP-3</shortName>
    </recommendedName>
</protein>
<proteinExistence type="evidence at transcript level"/>
<keyword id="KW-0044">Antibiotic</keyword>
<keyword id="KW-0929">Antimicrobial</keyword>
<keyword id="KW-1015">Disulfide bond</keyword>
<keyword id="KW-0391">Immunity</keyword>
<keyword id="KW-0399">Innate immunity</keyword>
<keyword id="KW-0964">Secreted</keyword>
<keyword id="KW-0732">Signal</keyword>
<feature type="signal peptide" evidence="2">
    <location>
        <begin position="1"/>
        <end position="18"/>
    </location>
</feature>
<feature type="chain" id="PRO_0000372768" description="Putative defense protein 3">
    <location>
        <begin position="19"/>
        <end position="163"/>
    </location>
</feature>
<feature type="domain" description="Reelin" evidence="3">
    <location>
        <begin position="19"/>
        <end position="163"/>
    </location>
</feature>
<feature type="disulfide bond" evidence="2">
    <location>
        <begin position="28"/>
        <end position="103"/>
    </location>
</feature>
<organism>
    <name type="scientific">Antheraea mylitta</name>
    <name type="common">Tasar silkworm</name>
    <dbReference type="NCBI Taxonomy" id="34739"/>
    <lineage>
        <taxon>Eukaryota</taxon>
        <taxon>Metazoa</taxon>
        <taxon>Ecdysozoa</taxon>
        <taxon>Arthropoda</taxon>
        <taxon>Hexapoda</taxon>
        <taxon>Insecta</taxon>
        <taxon>Pterygota</taxon>
        <taxon>Neoptera</taxon>
        <taxon>Endopterygota</taxon>
        <taxon>Lepidoptera</taxon>
        <taxon>Glossata</taxon>
        <taxon>Ditrysia</taxon>
        <taxon>Bombycoidea</taxon>
        <taxon>Saturniidae</taxon>
        <taxon>Saturniinae</taxon>
        <taxon>Saturniini</taxon>
        <taxon>Antheraea</taxon>
    </lineage>
</organism>
<evidence type="ECO:0000250" key="1"/>
<evidence type="ECO:0000255" key="2"/>
<evidence type="ECO:0000255" key="3">
    <source>
        <dbReference type="PROSITE-ProRule" id="PRU00363"/>
    </source>
</evidence>
<evidence type="ECO:0000305" key="4"/>